<accession>C6A3Q6</accession>
<dbReference type="EC" id="6.3.4.22" evidence="1"/>
<dbReference type="EMBL" id="CP001463">
    <property type="protein sequence ID" value="ACS90251.1"/>
    <property type="molecule type" value="Genomic_DNA"/>
</dbReference>
<dbReference type="SMR" id="C6A3Q6"/>
<dbReference type="STRING" id="604354.TSIB_1197"/>
<dbReference type="KEGG" id="tsi:TSIB_1197"/>
<dbReference type="eggNOG" id="arCOG01115">
    <property type="taxonomic scope" value="Archaea"/>
</dbReference>
<dbReference type="HOGENOM" id="CLU_675459_0_0_2"/>
<dbReference type="Proteomes" id="UP000009079">
    <property type="component" value="Chromosome"/>
</dbReference>
<dbReference type="GO" id="GO:0005737">
    <property type="term" value="C:cytoplasm"/>
    <property type="evidence" value="ECO:0007669"/>
    <property type="project" value="UniProtKB-SubCell"/>
</dbReference>
<dbReference type="GO" id="GO:0005524">
    <property type="term" value="F:ATP binding"/>
    <property type="evidence" value="ECO:0007669"/>
    <property type="project" value="UniProtKB-KW"/>
</dbReference>
<dbReference type="GO" id="GO:0016879">
    <property type="term" value="F:ligase activity, forming carbon-nitrogen bonds"/>
    <property type="evidence" value="ECO:0007669"/>
    <property type="project" value="UniProtKB-UniRule"/>
</dbReference>
<dbReference type="GO" id="GO:0003676">
    <property type="term" value="F:nucleic acid binding"/>
    <property type="evidence" value="ECO:0007669"/>
    <property type="project" value="InterPro"/>
</dbReference>
<dbReference type="GO" id="GO:0002101">
    <property type="term" value="P:tRNA wobble cytosine modification"/>
    <property type="evidence" value="ECO:0007669"/>
    <property type="project" value="UniProtKB-UniRule"/>
</dbReference>
<dbReference type="CDD" id="cd04482">
    <property type="entry name" value="RPA2_OBF_like"/>
    <property type="match status" value="1"/>
</dbReference>
<dbReference type="Gene3D" id="2.40.50.1010">
    <property type="match status" value="1"/>
</dbReference>
<dbReference type="Gene3D" id="3.30.70.2200">
    <property type="match status" value="1"/>
</dbReference>
<dbReference type="Gene3D" id="3.90.600.20">
    <property type="match status" value="1"/>
</dbReference>
<dbReference type="HAMAP" id="MF_01892">
    <property type="entry name" value="tRNA_Ile2_agm2C_synt"/>
    <property type="match status" value="1"/>
</dbReference>
<dbReference type="InterPro" id="IPR012340">
    <property type="entry name" value="NA-bd_OB-fold"/>
</dbReference>
<dbReference type="InterPro" id="IPR004365">
    <property type="entry name" value="NA-bd_OB_tRNA"/>
</dbReference>
<dbReference type="InterPro" id="IPR053434">
    <property type="entry name" value="TiaS"/>
</dbReference>
<dbReference type="InterPro" id="IPR053870">
    <property type="entry name" value="TiaS-like_TCKD"/>
</dbReference>
<dbReference type="InterPro" id="IPR013696">
    <property type="entry name" value="TiaS_FLD"/>
</dbReference>
<dbReference type="InterPro" id="IPR024913">
    <property type="entry name" value="tRNA_Ile2__agm2C_synt"/>
</dbReference>
<dbReference type="InterPro" id="IPR055394">
    <property type="entry name" value="Zn_ribbon_TiaS"/>
</dbReference>
<dbReference type="NCBIfam" id="NF040849">
    <property type="entry name" value="tRNAmod_TiaS"/>
    <property type="match status" value="1"/>
</dbReference>
<dbReference type="PANTHER" id="PTHR40705">
    <property type="entry name" value="TRNA(ILE2) 2-AGMATINYLCYTIDINE SYNTHETASE TIAS"/>
    <property type="match status" value="1"/>
</dbReference>
<dbReference type="PANTHER" id="PTHR40705:SF1">
    <property type="entry name" value="TRNA(ILE2) 2-AGMATINYLCYTIDINE SYNTHETASE TIAS"/>
    <property type="match status" value="1"/>
</dbReference>
<dbReference type="Pfam" id="PF08489">
    <property type="entry name" value="TiaS_FLD"/>
    <property type="match status" value="1"/>
</dbReference>
<dbReference type="Pfam" id="PF22641">
    <property type="entry name" value="TiaS_TCKD"/>
    <property type="match status" value="1"/>
</dbReference>
<dbReference type="Pfam" id="PF01336">
    <property type="entry name" value="tRNA_anti-codon"/>
    <property type="match status" value="1"/>
</dbReference>
<dbReference type="Pfam" id="PF23783">
    <property type="entry name" value="Zn_ribbon_TiaS"/>
    <property type="match status" value="1"/>
</dbReference>
<dbReference type="SUPFAM" id="SSF50249">
    <property type="entry name" value="Nucleic acid-binding proteins"/>
    <property type="match status" value="1"/>
</dbReference>
<reference key="1">
    <citation type="journal article" date="2009" name="Appl. Environ. Microbiol.">
        <title>Metabolic versatility and indigenous origin of the archaeon Thermococcus sibiricus, isolated from a siberian oil reservoir, as revealed by genome analysis.</title>
        <authorList>
            <person name="Mardanov A.V."/>
            <person name="Ravin N.V."/>
            <person name="Svetlitchnyi V.A."/>
            <person name="Beletsky A.V."/>
            <person name="Miroshnichenko M.L."/>
            <person name="Bonch-Osmolovskaya E.A."/>
            <person name="Skryabin K.G."/>
        </authorList>
    </citation>
    <scope>NUCLEOTIDE SEQUENCE [LARGE SCALE GENOMIC DNA]</scope>
    <source>
        <strain>DSM 12597 / MM 739</strain>
    </source>
</reference>
<keyword id="KW-0067">ATP-binding</keyword>
<keyword id="KW-0963">Cytoplasm</keyword>
<keyword id="KW-0436">Ligase</keyword>
<keyword id="KW-0547">Nucleotide-binding</keyword>
<keyword id="KW-1185">Reference proteome</keyword>
<keyword id="KW-0819">tRNA processing</keyword>
<proteinExistence type="inferred from homology"/>
<organism>
    <name type="scientific">Thermococcus sibiricus (strain DSM 12597 / MM 739)</name>
    <dbReference type="NCBI Taxonomy" id="604354"/>
    <lineage>
        <taxon>Archaea</taxon>
        <taxon>Methanobacteriati</taxon>
        <taxon>Methanobacteriota</taxon>
        <taxon>Thermococci</taxon>
        <taxon>Thermococcales</taxon>
        <taxon>Thermococcaceae</taxon>
        <taxon>Thermococcus</taxon>
    </lineage>
</organism>
<comment type="function">
    <text evidence="1">ATP-dependent agmatine transferase that catalyzes the formation of 2-agmatinylcytidine (agm2C) at the wobble position (C34) of tRNA(Ile2), converting the codon specificity from AUG to AUA.</text>
</comment>
<comment type="catalytic activity">
    <reaction evidence="1">
        <text>cytidine(34) in tRNA(Ile2) + agmatine + ATP + H2O = 2-agmatinylcytidine(34) in tRNA(Ile2) + AMP + 2 phosphate + 2 H(+)</text>
        <dbReference type="Rhea" id="RHEA:43608"/>
        <dbReference type="Rhea" id="RHEA-COMP:10625"/>
        <dbReference type="Rhea" id="RHEA-COMP:10626"/>
        <dbReference type="ChEBI" id="CHEBI:15377"/>
        <dbReference type="ChEBI" id="CHEBI:15378"/>
        <dbReference type="ChEBI" id="CHEBI:30616"/>
        <dbReference type="ChEBI" id="CHEBI:43474"/>
        <dbReference type="ChEBI" id="CHEBI:58145"/>
        <dbReference type="ChEBI" id="CHEBI:82748"/>
        <dbReference type="ChEBI" id="CHEBI:83545"/>
        <dbReference type="ChEBI" id="CHEBI:456215"/>
        <dbReference type="EC" id="6.3.4.22"/>
    </reaction>
</comment>
<comment type="subcellular location">
    <subcellularLocation>
        <location evidence="1">Cytoplasm</location>
    </subcellularLocation>
</comment>
<comment type="similarity">
    <text evidence="1">Belongs to the TiaS family.</text>
</comment>
<gene>
    <name evidence="1" type="primary">tiaS</name>
    <name type="ordered locus">TSIB_1197</name>
</gene>
<sequence>MVKLHIGIDDTDSPKGMCTTYLGALLYREISKIAEPLDLPKLIRLNPNVPYKTRGNGAVAMSFDAREEDILKIKNLVLEMVKKLSEFSHQNTNPGVVFIEGDIPEKLERFAYKAIWEHLNITDAENIAEELNAEIHKFRLGRGIIGALAAIGHPLKVFTYELLAYRTREFWGTARKVNKESVFAVDHLTYPFTYDNVDLSKGSVLITPHGKDPVLVGIRGIDKNKVIWAFENITFEEPIDFFQIYKTNQNTDDHLRFKKIAELKPLDSAIVRGKVIKKYWEKGRHVFFEISDDTGKLRVAAFEPTKGFRKYVRMLIEGDEIIAAGGVKEFNGVLTLNLEKFYPIKLTEKITYEKPKCPKCKGTMKSKGEYLKCKKCGYKMKKVLIPKRIPRDLKRKIYEVPPDARKHLSRPLVLPMAENKILDVLKLKR</sequence>
<evidence type="ECO:0000255" key="1">
    <source>
        <dbReference type="HAMAP-Rule" id="MF_01892"/>
    </source>
</evidence>
<protein>
    <recommendedName>
        <fullName evidence="1">tRNA(Ile2) 2-agmatinylcytidine synthetase TiaS</fullName>
        <shortName evidence="1">tRNA(Ile2)-agm2C synthetase</shortName>
        <ecNumber evidence="1">6.3.4.22</ecNumber>
    </recommendedName>
    <alternativeName>
        <fullName evidence="1">tRNA(Ile2) agmatidine synthetase</fullName>
    </alternativeName>
</protein>
<name>TIAS_THESM</name>
<feature type="chain" id="PRO_0000407304" description="tRNA(Ile2) 2-agmatinylcytidine synthetase TiaS">
    <location>
        <begin position="1"/>
        <end position="429"/>
    </location>
</feature>
<feature type="DNA-binding region" description="OB" evidence="1">
    <location>
        <begin position="271"/>
        <end position="343"/>
    </location>
</feature>